<protein>
    <recommendedName>
        <fullName evidence="1">Dihydroorotate dehydrogenase (quinone)</fullName>
        <ecNumber evidence="1">1.3.5.2</ecNumber>
    </recommendedName>
    <alternativeName>
        <fullName evidence="1">DHOdehase</fullName>
        <shortName evidence="1">DHOD</shortName>
        <shortName evidence="1">DHODase</shortName>
    </alternativeName>
    <alternativeName>
        <fullName evidence="1">Dihydroorotate oxidase</fullName>
    </alternativeName>
</protein>
<evidence type="ECO:0000255" key="1">
    <source>
        <dbReference type="HAMAP-Rule" id="MF_00225"/>
    </source>
</evidence>
<dbReference type="EC" id="1.3.5.2" evidence="1"/>
<dbReference type="EMBL" id="BX640433">
    <property type="protein sequence ID" value="CAE38824.1"/>
    <property type="molecule type" value="Genomic_DNA"/>
</dbReference>
<dbReference type="RefSeq" id="WP_010929117.1">
    <property type="nucleotide sequence ID" value="NC_002928.3"/>
</dbReference>
<dbReference type="SMR" id="Q7W4W6"/>
<dbReference type="GeneID" id="93205329"/>
<dbReference type="KEGG" id="bpa:BPP3540"/>
<dbReference type="HOGENOM" id="CLU_013640_2_0_4"/>
<dbReference type="UniPathway" id="UPA00070">
    <property type="reaction ID" value="UER00946"/>
</dbReference>
<dbReference type="Proteomes" id="UP000001421">
    <property type="component" value="Chromosome"/>
</dbReference>
<dbReference type="GO" id="GO:0005737">
    <property type="term" value="C:cytoplasm"/>
    <property type="evidence" value="ECO:0007669"/>
    <property type="project" value="InterPro"/>
</dbReference>
<dbReference type="GO" id="GO:0005886">
    <property type="term" value="C:plasma membrane"/>
    <property type="evidence" value="ECO:0007669"/>
    <property type="project" value="UniProtKB-SubCell"/>
</dbReference>
<dbReference type="GO" id="GO:0106430">
    <property type="term" value="F:dihydroorotate dehydrogenase (quinone) activity"/>
    <property type="evidence" value="ECO:0007669"/>
    <property type="project" value="UniProtKB-EC"/>
</dbReference>
<dbReference type="GO" id="GO:0006207">
    <property type="term" value="P:'de novo' pyrimidine nucleobase biosynthetic process"/>
    <property type="evidence" value="ECO:0007669"/>
    <property type="project" value="InterPro"/>
</dbReference>
<dbReference type="GO" id="GO:0044205">
    <property type="term" value="P:'de novo' UMP biosynthetic process"/>
    <property type="evidence" value="ECO:0007669"/>
    <property type="project" value="UniProtKB-UniRule"/>
</dbReference>
<dbReference type="CDD" id="cd04738">
    <property type="entry name" value="DHOD_2_like"/>
    <property type="match status" value="1"/>
</dbReference>
<dbReference type="Gene3D" id="3.20.20.70">
    <property type="entry name" value="Aldolase class I"/>
    <property type="match status" value="1"/>
</dbReference>
<dbReference type="HAMAP" id="MF_00225">
    <property type="entry name" value="DHO_dh_type2"/>
    <property type="match status" value="1"/>
</dbReference>
<dbReference type="InterPro" id="IPR013785">
    <property type="entry name" value="Aldolase_TIM"/>
</dbReference>
<dbReference type="InterPro" id="IPR050074">
    <property type="entry name" value="DHO_dehydrogenase"/>
</dbReference>
<dbReference type="InterPro" id="IPR012135">
    <property type="entry name" value="Dihydroorotate_DH_1_2"/>
</dbReference>
<dbReference type="InterPro" id="IPR005719">
    <property type="entry name" value="Dihydroorotate_DH_2"/>
</dbReference>
<dbReference type="InterPro" id="IPR005720">
    <property type="entry name" value="Dihydroorotate_DH_cat"/>
</dbReference>
<dbReference type="InterPro" id="IPR001295">
    <property type="entry name" value="Dihydroorotate_DH_CS"/>
</dbReference>
<dbReference type="NCBIfam" id="NF003644">
    <property type="entry name" value="PRK05286.1-1"/>
    <property type="match status" value="1"/>
</dbReference>
<dbReference type="NCBIfam" id="NF003645">
    <property type="entry name" value="PRK05286.1-2"/>
    <property type="match status" value="1"/>
</dbReference>
<dbReference type="NCBIfam" id="NF003646">
    <property type="entry name" value="PRK05286.1-4"/>
    <property type="match status" value="1"/>
</dbReference>
<dbReference type="NCBIfam" id="NF003652">
    <property type="entry name" value="PRK05286.2-5"/>
    <property type="match status" value="1"/>
</dbReference>
<dbReference type="NCBIfam" id="TIGR01036">
    <property type="entry name" value="pyrD_sub2"/>
    <property type="match status" value="1"/>
</dbReference>
<dbReference type="PANTHER" id="PTHR48109:SF4">
    <property type="entry name" value="DIHYDROOROTATE DEHYDROGENASE (QUINONE), MITOCHONDRIAL"/>
    <property type="match status" value="1"/>
</dbReference>
<dbReference type="PANTHER" id="PTHR48109">
    <property type="entry name" value="DIHYDROOROTATE DEHYDROGENASE (QUINONE), MITOCHONDRIAL-RELATED"/>
    <property type="match status" value="1"/>
</dbReference>
<dbReference type="Pfam" id="PF01180">
    <property type="entry name" value="DHO_dh"/>
    <property type="match status" value="1"/>
</dbReference>
<dbReference type="PIRSF" id="PIRSF000164">
    <property type="entry name" value="DHO_oxidase"/>
    <property type="match status" value="1"/>
</dbReference>
<dbReference type="SUPFAM" id="SSF51395">
    <property type="entry name" value="FMN-linked oxidoreductases"/>
    <property type="match status" value="1"/>
</dbReference>
<dbReference type="PROSITE" id="PS00911">
    <property type="entry name" value="DHODEHASE_1"/>
    <property type="match status" value="1"/>
</dbReference>
<dbReference type="PROSITE" id="PS00912">
    <property type="entry name" value="DHODEHASE_2"/>
    <property type="match status" value="1"/>
</dbReference>
<comment type="function">
    <text evidence="1">Catalyzes the conversion of dihydroorotate to orotate with quinone as electron acceptor.</text>
</comment>
<comment type="catalytic activity">
    <reaction evidence="1">
        <text>(S)-dihydroorotate + a quinone = orotate + a quinol</text>
        <dbReference type="Rhea" id="RHEA:30187"/>
        <dbReference type="ChEBI" id="CHEBI:24646"/>
        <dbReference type="ChEBI" id="CHEBI:30839"/>
        <dbReference type="ChEBI" id="CHEBI:30864"/>
        <dbReference type="ChEBI" id="CHEBI:132124"/>
        <dbReference type="EC" id="1.3.5.2"/>
    </reaction>
</comment>
<comment type="cofactor">
    <cofactor evidence="1">
        <name>FMN</name>
        <dbReference type="ChEBI" id="CHEBI:58210"/>
    </cofactor>
    <text evidence="1">Binds 1 FMN per subunit.</text>
</comment>
<comment type="pathway">
    <text evidence="1">Pyrimidine metabolism; UMP biosynthesis via de novo pathway; orotate from (S)-dihydroorotate (quinone route): step 1/1.</text>
</comment>
<comment type="subunit">
    <text evidence="1">Monomer.</text>
</comment>
<comment type="subcellular location">
    <subcellularLocation>
        <location evidence="1">Cell membrane</location>
        <topology evidence="1">Peripheral membrane protein</topology>
    </subcellularLocation>
</comment>
<comment type="similarity">
    <text evidence="1">Belongs to the dihydroorotate dehydrogenase family. Type 2 subfamily.</text>
</comment>
<gene>
    <name evidence="1" type="primary">pyrD</name>
    <name type="ordered locus">BPP3540</name>
</gene>
<reference key="1">
    <citation type="journal article" date="2003" name="Nat. Genet.">
        <title>Comparative analysis of the genome sequences of Bordetella pertussis, Bordetella parapertussis and Bordetella bronchiseptica.</title>
        <authorList>
            <person name="Parkhill J."/>
            <person name="Sebaihia M."/>
            <person name="Preston A."/>
            <person name="Murphy L.D."/>
            <person name="Thomson N.R."/>
            <person name="Harris D.E."/>
            <person name="Holden M.T.G."/>
            <person name="Churcher C.M."/>
            <person name="Bentley S.D."/>
            <person name="Mungall K.L."/>
            <person name="Cerdeno-Tarraga A.-M."/>
            <person name="Temple L."/>
            <person name="James K.D."/>
            <person name="Harris B."/>
            <person name="Quail M.A."/>
            <person name="Achtman M."/>
            <person name="Atkin R."/>
            <person name="Baker S."/>
            <person name="Basham D."/>
            <person name="Bason N."/>
            <person name="Cherevach I."/>
            <person name="Chillingworth T."/>
            <person name="Collins M."/>
            <person name="Cronin A."/>
            <person name="Davis P."/>
            <person name="Doggett J."/>
            <person name="Feltwell T."/>
            <person name="Goble A."/>
            <person name="Hamlin N."/>
            <person name="Hauser H."/>
            <person name="Holroyd S."/>
            <person name="Jagels K."/>
            <person name="Leather S."/>
            <person name="Moule S."/>
            <person name="Norberczak H."/>
            <person name="O'Neil S."/>
            <person name="Ormond D."/>
            <person name="Price C."/>
            <person name="Rabbinowitsch E."/>
            <person name="Rutter S."/>
            <person name="Sanders M."/>
            <person name="Saunders D."/>
            <person name="Seeger K."/>
            <person name="Sharp S."/>
            <person name="Simmonds M."/>
            <person name="Skelton J."/>
            <person name="Squares R."/>
            <person name="Squares S."/>
            <person name="Stevens K."/>
            <person name="Unwin L."/>
            <person name="Whitehead S."/>
            <person name="Barrell B.G."/>
            <person name="Maskell D.J."/>
        </authorList>
    </citation>
    <scope>NUCLEOTIDE SEQUENCE [LARGE SCALE GENOMIC DNA]</scope>
    <source>
        <strain>12822 / ATCC BAA-587 / NCTC 13253</strain>
    </source>
</reference>
<sequence>MSILFHAYPLARPALFAMDAETAHEVTLAQLQRAYDCGLTRKLLHAQPEAPATLMGLSLRNPVGLAAGLDKNGAHIDALGNLGFGFVEVGTVTPRAQPGNPKPRMFRLPRANALINRLGFNNQGLDAFIANVQRSQWRSQGGILGLNIGKNADTPIERAAEDYLISLAGVYPHADYVTVNISSPNTKNLRALQGGDELSALLGQLQERRLALADQHQRHVPLAVKIAPDLSDDQIDAIAEILPRHGIDGVIATNTTLARDAVQGLPHAEEAGGVSGAPVHELSLRVIERLRSRLGDAVAIIGVGGILSGRQASEKMAAGAQAVQLYTGLIYRGPALVGECVRALAQGSR</sequence>
<keyword id="KW-1003">Cell membrane</keyword>
<keyword id="KW-0285">Flavoprotein</keyword>
<keyword id="KW-0288">FMN</keyword>
<keyword id="KW-0472">Membrane</keyword>
<keyword id="KW-0560">Oxidoreductase</keyword>
<keyword id="KW-0665">Pyrimidine biosynthesis</keyword>
<name>PYRD_BORPA</name>
<accession>Q7W4W6</accession>
<proteinExistence type="inferred from homology"/>
<feature type="chain" id="PRO_0000148424" description="Dihydroorotate dehydrogenase (quinone)">
    <location>
        <begin position="1"/>
        <end position="349"/>
    </location>
</feature>
<feature type="active site" description="Nucleophile" evidence="1">
    <location>
        <position position="183"/>
    </location>
</feature>
<feature type="binding site" evidence="1">
    <location>
        <begin position="67"/>
        <end position="71"/>
    </location>
    <ligand>
        <name>FMN</name>
        <dbReference type="ChEBI" id="CHEBI:58210"/>
    </ligand>
</feature>
<feature type="binding site" evidence="1">
    <location>
        <position position="71"/>
    </location>
    <ligand>
        <name>substrate</name>
    </ligand>
</feature>
<feature type="binding site" evidence="1">
    <location>
        <position position="91"/>
    </location>
    <ligand>
        <name>FMN</name>
        <dbReference type="ChEBI" id="CHEBI:58210"/>
    </ligand>
</feature>
<feature type="binding site" evidence="1">
    <location>
        <begin position="116"/>
        <end position="120"/>
    </location>
    <ligand>
        <name>substrate</name>
    </ligand>
</feature>
<feature type="binding site" evidence="1">
    <location>
        <position position="147"/>
    </location>
    <ligand>
        <name>FMN</name>
        <dbReference type="ChEBI" id="CHEBI:58210"/>
    </ligand>
</feature>
<feature type="binding site" evidence="1">
    <location>
        <position position="180"/>
    </location>
    <ligand>
        <name>FMN</name>
        <dbReference type="ChEBI" id="CHEBI:58210"/>
    </ligand>
</feature>
<feature type="binding site" evidence="1">
    <location>
        <position position="180"/>
    </location>
    <ligand>
        <name>substrate</name>
    </ligand>
</feature>
<feature type="binding site" evidence="1">
    <location>
        <position position="185"/>
    </location>
    <ligand>
        <name>substrate</name>
    </ligand>
</feature>
<feature type="binding site" evidence="1">
    <location>
        <position position="225"/>
    </location>
    <ligand>
        <name>FMN</name>
        <dbReference type="ChEBI" id="CHEBI:58210"/>
    </ligand>
</feature>
<feature type="binding site" evidence="1">
    <location>
        <position position="253"/>
    </location>
    <ligand>
        <name>FMN</name>
        <dbReference type="ChEBI" id="CHEBI:58210"/>
    </ligand>
</feature>
<feature type="binding site" evidence="1">
    <location>
        <begin position="254"/>
        <end position="255"/>
    </location>
    <ligand>
        <name>substrate</name>
    </ligand>
</feature>
<feature type="binding site" evidence="1">
    <location>
        <position position="276"/>
    </location>
    <ligand>
        <name>FMN</name>
        <dbReference type="ChEBI" id="CHEBI:58210"/>
    </ligand>
</feature>
<feature type="binding site" evidence="1">
    <location>
        <position position="305"/>
    </location>
    <ligand>
        <name>FMN</name>
        <dbReference type="ChEBI" id="CHEBI:58210"/>
    </ligand>
</feature>
<feature type="binding site" evidence="1">
    <location>
        <begin position="326"/>
        <end position="327"/>
    </location>
    <ligand>
        <name>FMN</name>
        <dbReference type="ChEBI" id="CHEBI:58210"/>
    </ligand>
</feature>
<organism>
    <name type="scientific">Bordetella parapertussis (strain 12822 / ATCC BAA-587 / NCTC 13253)</name>
    <dbReference type="NCBI Taxonomy" id="257311"/>
    <lineage>
        <taxon>Bacteria</taxon>
        <taxon>Pseudomonadati</taxon>
        <taxon>Pseudomonadota</taxon>
        <taxon>Betaproteobacteria</taxon>
        <taxon>Burkholderiales</taxon>
        <taxon>Alcaligenaceae</taxon>
        <taxon>Bordetella</taxon>
    </lineage>
</organism>